<accession>C0NZL9</accession>
<comment type="function">
    <text evidence="1">Promotes mitochondrial protein synthesis. May act as a fidelity factor of the translation reaction, by catalyzing a one-codon backward translocation of tRNAs on improperly translocated ribosomes. Binds to mitochondrial ribosomes in a GTP-dependent manner.</text>
</comment>
<comment type="catalytic activity">
    <reaction evidence="1">
        <text>GTP + H2O = GDP + phosphate + H(+)</text>
        <dbReference type="Rhea" id="RHEA:19669"/>
        <dbReference type="ChEBI" id="CHEBI:15377"/>
        <dbReference type="ChEBI" id="CHEBI:15378"/>
        <dbReference type="ChEBI" id="CHEBI:37565"/>
        <dbReference type="ChEBI" id="CHEBI:43474"/>
        <dbReference type="ChEBI" id="CHEBI:58189"/>
    </reaction>
</comment>
<comment type="subcellular location">
    <subcellularLocation>
        <location evidence="1">Mitochondrion inner membrane</location>
        <topology evidence="1">Peripheral membrane protein</topology>
        <orientation evidence="1">Matrix side</orientation>
    </subcellularLocation>
</comment>
<comment type="similarity">
    <text evidence="2">Belongs to the TRAFAC class translation factor GTPase superfamily. Classic translation factor GTPase family. LepA subfamily.</text>
</comment>
<name>GUF1_AJECG</name>
<organism>
    <name type="scientific">Ajellomyces capsulatus (strain G186AR / H82 / ATCC MYA-2454 / RMSCC 2432)</name>
    <name type="common">Darling's disease fungus</name>
    <name type="synonym">Histoplasma capsulatum</name>
    <dbReference type="NCBI Taxonomy" id="447093"/>
    <lineage>
        <taxon>Eukaryota</taxon>
        <taxon>Fungi</taxon>
        <taxon>Dikarya</taxon>
        <taxon>Ascomycota</taxon>
        <taxon>Pezizomycotina</taxon>
        <taxon>Eurotiomycetes</taxon>
        <taxon>Eurotiomycetidae</taxon>
        <taxon>Onygenales</taxon>
        <taxon>Ajellomycetaceae</taxon>
        <taxon>Histoplasma</taxon>
    </lineage>
</organism>
<feature type="transit peptide" description="Mitochondrion" evidence="1">
    <location>
        <begin position="1"/>
        <end position="39"/>
    </location>
</feature>
<feature type="chain" id="PRO_0000402866" description="Translation factor GUF1, mitochondrial">
    <location>
        <begin position="40"/>
        <end position="657"/>
    </location>
</feature>
<feature type="domain" description="tr-type G">
    <location>
        <begin position="59"/>
        <end position="239"/>
    </location>
</feature>
<feature type="binding site" evidence="1">
    <location>
        <begin position="68"/>
        <end position="75"/>
    </location>
    <ligand>
        <name>GTP</name>
        <dbReference type="ChEBI" id="CHEBI:37565"/>
    </ligand>
</feature>
<feature type="binding site" evidence="1">
    <location>
        <begin position="132"/>
        <end position="136"/>
    </location>
    <ligand>
        <name>GTP</name>
        <dbReference type="ChEBI" id="CHEBI:37565"/>
    </ligand>
</feature>
<feature type="binding site" evidence="1">
    <location>
        <begin position="186"/>
        <end position="189"/>
    </location>
    <ligand>
        <name>GTP</name>
        <dbReference type="ChEBI" id="CHEBI:37565"/>
    </ligand>
</feature>
<protein>
    <recommendedName>
        <fullName evidence="1">Translation factor GUF1, mitochondrial</fullName>
        <ecNumber>3.6.5.-</ecNumber>
    </recommendedName>
    <alternativeName>
        <fullName evidence="1">Elongation factor 4 homolog</fullName>
        <shortName evidence="1">EF-4</shortName>
    </alternativeName>
    <alternativeName>
        <fullName evidence="1">GTPase GUF1</fullName>
    </alternativeName>
    <alternativeName>
        <fullName evidence="1">Ribosomal back-translocase</fullName>
    </alternativeName>
</protein>
<proteinExistence type="inferred from homology"/>
<keyword id="KW-0342">GTP-binding</keyword>
<keyword id="KW-0378">Hydrolase</keyword>
<keyword id="KW-0472">Membrane</keyword>
<keyword id="KW-0496">Mitochondrion</keyword>
<keyword id="KW-0999">Mitochondrion inner membrane</keyword>
<keyword id="KW-0547">Nucleotide-binding</keyword>
<keyword id="KW-0648">Protein biosynthesis</keyword>
<keyword id="KW-1185">Reference proteome</keyword>
<keyword id="KW-0809">Transit peptide</keyword>
<reference key="1">
    <citation type="submission" date="2009-02" db="EMBL/GenBank/DDBJ databases">
        <title>The genome sequence of Ajellomyces capsulatus strain G186AR.</title>
        <authorList>
            <person name="Champion M."/>
            <person name="Cuomo C.A."/>
            <person name="Ma L.-J."/>
            <person name="Henn M.R."/>
            <person name="Sil A."/>
            <person name="Goldman B."/>
            <person name="Young S.K."/>
            <person name="Kodira C.D."/>
            <person name="Zeng Q."/>
            <person name="Koehrsen M."/>
            <person name="Alvarado L."/>
            <person name="Berlin A."/>
            <person name="Borenstein D."/>
            <person name="Chen Z."/>
            <person name="Engels R."/>
            <person name="Freedman E."/>
            <person name="Gellesch M."/>
            <person name="Goldberg J."/>
            <person name="Griggs A."/>
            <person name="Gujja S."/>
            <person name="Heiman D."/>
            <person name="Hepburn T."/>
            <person name="Howarth C."/>
            <person name="Jen D."/>
            <person name="Larson L."/>
            <person name="Lewis B."/>
            <person name="Mehta T."/>
            <person name="Park D."/>
            <person name="Pearson M."/>
            <person name="Roberts A."/>
            <person name="Saif S."/>
            <person name="Shea T."/>
            <person name="Shenoy N."/>
            <person name="Sisk P."/>
            <person name="Stolte C."/>
            <person name="Sykes S."/>
            <person name="Walk T."/>
            <person name="White J."/>
            <person name="Yandava C."/>
            <person name="Klein B."/>
            <person name="McEwen J.G."/>
            <person name="Puccia R."/>
            <person name="Goldman G.H."/>
            <person name="Felipe M.S."/>
            <person name="Nino-Vega G."/>
            <person name="San-Blas G."/>
            <person name="Taylor J."/>
            <person name="Mendoza L."/>
            <person name="Galagan J.E."/>
            <person name="Nusbaum C."/>
            <person name="Birren B.W."/>
        </authorList>
    </citation>
    <scope>NUCLEOTIDE SEQUENCE [LARGE SCALE GENOMIC DNA]</scope>
    <source>
        <strain>G186AR / H82 / ATCC MYA-2454 / RMSCC 2432</strain>
    </source>
</reference>
<gene>
    <name evidence="1" type="primary">GUF1</name>
    <name type="ORF">HCBG_08599</name>
</gene>
<dbReference type="EC" id="3.6.5.-"/>
<dbReference type="EMBL" id="GG663378">
    <property type="protein sequence ID" value="EEH03267.1"/>
    <property type="molecule type" value="Genomic_DNA"/>
</dbReference>
<dbReference type="SMR" id="C0NZL9"/>
<dbReference type="FunCoup" id="C0NZL9">
    <property type="interactions" value="679"/>
</dbReference>
<dbReference type="STRING" id="447093.C0NZL9"/>
<dbReference type="VEuPathDB" id="FungiDB:I7I50_00051"/>
<dbReference type="HOGENOM" id="CLU_009995_3_1_1"/>
<dbReference type="InParanoid" id="C0NZL9"/>
<dbReference type="Proteomes" id="UP000001631">
    <property type="component" value="Unassembled WGS sequence"/>
</dbReference>
<dbReference type="GO" id="GO:0005743">
    <property type="term" value="C:mitochondrial inner membrane"/>
    <property type="evidence" value="ECO:0007669"/>
    <property type="project" value="UniProtKB-SubCell"/>
</dbReference>
<dbReference type="GO" id="GO:0005759">
    <property type="term" value="C:mitochondrial matrix"/>
    <property type="evidence" value="ECO:0007669"/>
    <property type="project" value="UniProtKB-UniRule"/>
</dbReference>
<dbReference type="GO" id="GO:0005525">
    <property type="term" value="F:GTP binding"/>
    <property type="evidence" value="ECO:0007669"/>
    <property type="project" value="UniProtKB-UniRule"/>
</dbReference>
<dbReference type="GO" id="GO:0003924">
    <property type="term" value="F:GTPase activity"/>
    <property type="evidence" value="ECO:0007669"/>
    <property type="project" value="UniProtKB-UniRule"/>
</dbReference>
<dbReference type="GO" id="GO:0097177">
    <property type="term" value="F:mitochondrial ribosome binding"/>
    <property type="evidence" value="ECO:0007669"/>
    <property type="project" value="TreeGrafter"/>
</dbReference>
<dbReference type="GO" id="GO:0045727">
    <property type="term" value="P:positive regulation of translation"/>
    <property type="evidence" value="ECO:0007669"/>
    <property type="project" value="UniProtKB-UniRule"/>
</dbReference>
<dbReference type="GO" id="GO:0006412">
    <property type="term" value="P:translation"/>
    <property type="evidence" value="ECO:0007669"/>
    <property type="project" value="UniProtKB-KW"/>
</dbReference>
<dbReference type="CDD" id="cd03699">
    <property type="entry name" value="EF4_II"/>
    <property type="match status" value="1"/>
</dbReference>
<dbReference type="CDD" id="cd16260">
    <property type="entry name" value="EF4_III"/>
    <property type="match status" value="1"/>
</dbReference>
<dbReference type="CDD" id="cd01890">
    <property type="entry name" value="LepA"/>
    <property type="match status" value="1"/>
</dbReference>
<dbReference type="CDD" id="cd03709">
    <property type="entry name" value="lepA_C"/>
    <property type="match status" value="1"/>
</dbReference>
<dbReference type="FunFam" id="3.40.50.300:FF:000078">
    <property type="entry name" value="Elongation factor 4"/>
    <property type="match status" value="1"/>
</dbReference>
<dbReference type="FunFam" id="2.40.30.10:FF:000015">
    <property type="entry name" value="Translation factor GUF1, mitochondrial"/>
    <property type="match status" value="1"/>
</dbReference>
<dbReference type="FunFam" id="3.30.70.240:FF:000007">
    <property type="entry name" value="Translation factor GUF1, mitochondrial"/>
    <property type="match status" value="1"/>
</dbReference>
<dbReference type="FunFam" id="3.30.70.2570:FF:000001">
    <property type="entry name" value="Translation factor GUF1, mitochondrial"/>
    <property type="match status" value="1"/>
</dbReference>
<dbReference type="FunFam" id="3.30.70.870:FF:000004">
    <property type="entry name" value="Translation factor GUF1, mitochondrial"/>
    <property type="match status" value="1"/>
</dbReference>
<dbReference type="Gene3D" id="3.30.70.240">
    <property type="match status" value="1"/>
</dbReference>
<dbReference type="Gene3D" id="3.30.70.2570">
    <property type="entry name" value="Elongation factor 4, C-terminal domain"/>
    <property type="match status" value="1"/>
</dbReference>
<dbReference type="Gene3D" id="3.30.70.870">
    <property type="entry name" value="Elongation Factor G (Translational Gtpase), domain 3"/>
    <property type="match status" value="1"/>
</dbReference>
<dbReference type="Gene3D" id="3.40.50.300">
    <property type="entry name" value="P-loop containing nucleotide triphosphate hydrolases"/>
    <property type="match status" value="1"/>
</dbReference>
<dbReference type="Gene3D" id="2.40.30.10">
    <property type="entry name" value="Translation factors"/>
    <property type="match status" value="1"/>
</dbReference>
<dbReference type="HAMAP" id="MF_00071">
    <property type="entry name" value="LepA"/>
    <property type="match status" value="1"/>
</dbReference>
<dbReference type="InterPro" id="IPR006297">
    <property type="entry name" value="EF-4"/>
</dbReference>
<dbReference type="InterPro" id="IPR035647">
    <property type="entry name" value="EFG_III/V"/>
</dbReference>
<dbReference type="InterPro" id="IPR000640">
    <property type="entry name" value="EFG_V-like"/>
</dbReference>
<dbReference type="InterPro" id="IPR031157">
    <property type="entry name" value="G_TR_CS"/>
</dbReference>
<dbReference type="InterPro" id="IPR038363">
    <property type="entry name" value="LepA_C_sf"/>
</dbReference>
<dbReference type="InterPro" id="IPR013842">
    <property type="entry name" value="LepA_CTD"/>
</dbReference>
<dbReference type="InterPro" id="IPR035654">
    <property type="entry name" value="LepA_IV"/>
</dbReference>
<dbReference type="InterPro" id="IPR027417">
    <property type="entry name" value="P-loop_NTPase"/>
</dbReference>
<dbReference type="InterPro" id="IPR005225">
    <property type="entry name" value="Small_GTP-bd"/>
</dbReference>
<dbReference type="InterPro" id="IPR000795">
    <property type="entry name" value="T_Tr_GTP-bd_dom"/>
</dbReference>
<dbReference type="NCBIfam" id="TIGR01393">
    <property type="entry name" value="lepA"/>
    <property type="match status" value="1"/>
</dbReference>
<dbReference type="NCBIfam" id="TIGR00231">
    <property type="entry name" value="small_GTP"/>
    <property type="match status" value="1"/>
</dbReference>
<dbReference type="PANTHER" id="PTHR43512:SF7">
    <property type="entry name" value="TRANSLATION FACTOR GUF1, MITOCHONDRIAL"/>
    <property type="match status" value="1"/>
</dbReference>
<dbReference type="PANTHER" id="PTHR43512">
    <property type="entry name" value="TRANSLATION FACTOR GUF1-RELATED"/>
    <property type="match status" value="1"/>
</dbReference>
<dbReference type="Pfam" id="PF00679">
    <property type="entry name" value="EFG_C"/>
    <property type="match status" value="1"/>
</dbReference>
<dbReference type="Pfam" id="PF00009">
    <property type="entry name" value="GTP_EFTU"/>
    <property type="match status" value="1"/>
</dbReference>
<dbReference type="Pfam" id="PF06421">
    <property type="entry name" value="LepA_C"/>
    <property type="match status" value="1"/>
</dbReference>
<dbReference type="PRINTS" id="PR00315">
    <property type="entry name" value="ELONGATNFCT"/>
</dbReference>
<dbReference type="SUPFAM" id="SSF54980">
    <property type="entry name" value="EF-G C-terminal domain-like"/>
    <property type="match status" value="2"/>
</dbReference>
<dbReference type="SUPFAM" id="SSF52540">
    <property type="entry name" value="P-loop containing nucleoside triphosphate hydrolases"/>
    <property type="match status" value="1"/>
</dbReference>
<dbReference type="PROSITE" id="PS00301">
    <property type="entry name" value="G_TR_1"/>
    <property type="match status" value="1"/>
</dbReference>
<dbReference type="PROSITE" id="PS51722">
    <property type="entry name" value="G_TR_2"/>
    <property type="match status" value="1"/>
</dbReference>
<evidence type="ECO:0000255" key="1">
    <source>
        <dbReference type="HAMAP-Rule" id="MF_03137"/>
    </source>
</evidence>
<evidence type="ECO:0000305" key="2"/>
<sequence length="657" mass="73165">MRGCLQSVKWLTSALRPSQSLASSTRYPRRLLSTSAPRNAQVRKPASEVEQRIAAIPIERFRNFCIVAHVDHGKSTLSDRLLELTGTIEAGANKQVLDKLDVERERGITVKAQTCSMLYNHQGEDYLLHLVDTPGHVDFRAEVSRSYASCGGALLLVDASQGIQAQTVANFYLAFAEGLKLVPVINKVDLPSADPQRALDQMKNTFELDPESAVLVSAKTGLNVSQLLPTVIEQIPAPVGDRTKPLRMLLVDSWYSTYKGVILLVRLFDGEIRAGDQVVSFATGLKYTVGEVGIMYPGQTAQSVLRAGQVGYIYFNPAMKRSQEAKVGDTYTKVGSERLVQPLPGFEEPKAMVFVAAYPVDASDFPHLEDSINQLILNDRSVTLQKESSEALGAGFRLGFLGTLHCSVFEDRLRQEHGASIIITPPTVPFKVIWKDGKEEIITNPALFPEEDTLRAKVTELQEPFVLATLTFPEEYLGRVIELCESNRGEQKSLEFFTSTQVILKYELPLAQLVDDFFGKLKGSTKGYASLDYEESGWRRSNISKLQLLVNKVPVDAVSRVVHSSQVQRLGRLWVSKFKEHVDRQMFEVVIQAAAGRNVVARESIKPFRKDVLQKLHAADVTRRKKLLEKQKEGRKKLKAVGNVVIEHKAFQAFLAK</sequence>